<proteinExistence type="inferred from homology"/>
<sequence>MRMMVAGGGTGGHVFPGIALAEEVVTRHPANDVVFVGTARGLEASVVPAAGFPIELIEVKGLKGKGIAGALLNLLLLPRAFLQSWRILKRWRPDVVVGVGGYASGPVVLTAWAMRIPTAVQEQNAIAGLTNRLLGRVVKAAFTAFPEAARHFAARKVYQLGNPIRRRLMENYMRPESAHGQPRLLVFGGSQGAHALNMRVIEALPHLADLRERIQITHQTGARDREYVEKGYRACGFTPDVREFIDDMSAAYAGCDLVVCRAGATTLAELTVCKKPSILVPFPAAADNHQVKNARSLVDAGAAVMIEERDLTGEVLAREIREILDAPERRERMARAAGRLGSPQAAKEIADVCMELVRRRWGSPFGQAREPGQKPARPPDLAS</sequence>
<dbReference type="EC" id="2.4.1.227" evidence="1"/>
<dbReference type="EMBL" id="CP001131">
    <property type="protein sequence ID" value="ACG75038.1"/>
    <property type="molecule type" value="Genomic_DNA"/>
</dbReference>
<dbReference type="RefSeq" id="WP_012527798.1">
    <property type="nucleotide sequence ID" value="NC_011145.1"/>
</dbReference>
<dbReference type="SMR" id="B4UES1"/>
<dbReference type="CAZy" id="GT28">
    <property type="family name" value="Glycosyltransferase Family 28"/>
</dbReference>
<dbReference type="KEGG" id="ank:AnaeK_3827"/>
<dbReference type="HOGENOM" id="CLU_037404_2_1_7"/>
<dbReference type="OrthoDB" id="9808936at2"/>
<dbReference type="UniPathway" id="UPA00219"/>
<dbReference type="Proteomes" id="UP000001871">
    <property type="component" value="Chromosome"/>
</dbReference>
<dbReference type="GO" id="GO:0005886">
    <property type="term" value="C:plasma membrane"/>
    <property type="evidence" value="ECO:0007669"/>
    <property type="project" value="UniProtKB-SubCell"/>
</dbReference>
<dbReference type="GO" id="GO:0051991">
    <property type="term" value="F:UDP-N-acetyl-D-glucosamine:N-acetylmuramoyl-L-alanyl-D-glutamyl-meso-2,6-diaminopimelyl-D-alanyl-D-alanine-diphosphoundecaprenol 4-beta-N-acetylglucosaminlytransferase activity"/>
    <property type="evidence" value="ECO:0007669"/>
    <property type="project" value="RHEA"/>
</dbReference>
<dbReference type="GO" id="GO:0050511">
    <property type="term" value="F:undecaprenyldiphospho-muramoylpentapeptide beta-N-acetylglucosaminyltransferase activity"/>
    <property type="evidence" value="ECO:0007669"/>
    <property type="project" value="UniProtKB-UniRule"/>
</dbReference>
<dbReference type="GO" id="GO:0005975">
    <property type="term" value="P:carbohydrate metabolic process"/>
    <property type="evidence" value="ECO:0007669"/>
    <property type="project" value="InterPro"/>
</dbReference>
<dbReference type="GO" id="GO:0051301">
    <property type="term" value="P:cell division"/>
    <property type="evidence" value="ECO:0007669"/>
    <property type="project" value="UniProtKB-KW"/>
</dbReference>
<dbReference type="GO" id="GO:0071555">
    <property type="term" value="P:cell wall organization"/>
    <property type="evidence" value="ECO:0007669"/>
    <property type="project" value="UniProtKB-KW"/>
</dbReference>
<dbReference type="GO" id="GO:0030259">
    <property type="term" value="P:lipid glycosylation"/>
    <property type="evidence" value="ECO:0007669"/>
    <property type="project" value="UniProtKB-UniRule"/>
</dbReference>
<dbReference type="GO" id="GO:0009252">
    <property type="term" value="P:peptidoglycan biosynthetic process"/>
    <property type="evidence" value="ECO:0007669"/>
    <property type="project" value="UniProtKB-UniRule"/>
</dbReference>
<dbReference type="GO" id="GO:0008360">
    <property type="term" value="P:regulation of cell shape"/>
    <property type="evidence" value="ECO:0007669"/>
    <property type="project" value="UniProtKB-KW"/>
</dbReference>
<dbReference type="CDD" id="cd03785">
    <property type="entry name" value="GT28_MurG"/>
    <property type="match status" value="1"/>
</dbReference>
<dbReference type="Gene3D" id="3.40.50.2000">
    <property type="entry name" value="Glycogen Phosphorylase B"/>
    <property type="match status" value="2"/>
</dbReference>
<dbReference type="HAMAP" id="MF_00033">
    <property type="entry name" value="MurG"/>
    <property type="match status" value="1"/>
</dbReference>
<dbReference type="InterPro" id="IPR006009">
    <property type="entry name" value="GlcNAc_MurG"/>
</dbReference>
<dbReference type="InterPro" id="IPR007235">
    <property type="entry name" value="Glyco_trans_28_C"/>
</dbReference>
<dbReference type="InterPro" id="IPR004276">
    <property type="entry name" value="GlycoTrans_28_N"/>
</dbReference>
<dbReference type="NCBIfam" id="TIGR01133">
    <property type="entry name" value="murG"/>
    <property type="match status" value="1"/>
</dbReference>
<dbReference type="PANTHER" id="PTHR21015:SF22">
    <property type="entry name" value="GLYCOSYLTRANSFERASE"/>
    <property type="match status" value="1"/>
</dbReference>
<dbReference type="PANTHER" id="PTHR21015">
    <property type="entry name" value="UDP-N-ACETYLGLUCOSAMINE--N-ACETYLMURAMYL-(PENTAPEPTIDE) PYROPHOSPHORYL-UNDECAPRENOL N-ACETYLGLUCOSAMINE TRANSFERASE 1"/>
    <property type="match status" value="1"/>
</dbReference>
<dbReference type="Pfam" id="PF04101">
    <property type="entry name" value="Glyco_tran_28_C"/>
    <property type="match status" value="1"/>
</dbReference>
<dbReference type="Pfam" id="PF03033">
    <property type="entry name" value="Glyco_transf_28"/>
    <property type="match status" value="1"/>
</dbReference>
<dbReference type="SUPFAM" id="SSF53756">
    <property type="entry name" value="UDP-Glycosyltransferase/glycogen phosphorylase"/>
    <property type="match status" value="1"/>
</dbReference>
<accession>B4UES1</accession>
<gene>
    <name evidence="1" type="primary">murG</name>
    <name type="ordered locus">AnaeK_3827</name>
</gene>
<organism>
    <name type="scientific">Anaeromyxobacter sp. (strain K)</name>
    <dbReference type="NCBI Taxonomy" id="447217"/>
    <lineage>
        <taxon>Bacteria</taxon>
        <taxon>Pseudomonadati</taxon>
        <taxon>Myxococcota</taxon>
        <taxon>Myxococcia</taxon>
        <taxon>Myxococcales</taxon>
        <taxon>Cystobacterineae</taxon>
        <taxon>Anaeromyxobacteraceae</taxon>
        <taxon>Anaeromyxobacter</taxon>
    </lineage>
</organism>
<evidence type="ECO:0000255" key="1">
    <source>
        <dbReference type="HAMAP-Rule" id="MF_00033"/>
    </source>
</evidence>
<evidence type="ECO:0000256" key="2">
    <source>
        <dbReference type="SAM" id="MobiDB-lite"/>
    </source>
</evidence>
<reference key="1">
    <citation type="submission" date="2008-08" db="EMBL/GenBank/DDBJ databases">
        <title>Complete sequence of Anaeromyxobacter sp. K.</title>
        <authorList>
            <consortium name="US DOE Joint Genome Institute"/>
            <person name="Lucas S."/>
            <person name="Copeland A."/>
            <person name="Lapidus A."/>
            <person name="Glavina del Rio T."/>
            <person name="Dalin E."/>
            <person name="Tice H."/>
            <person name="Bruce D."/>
            <person name="Goodwin L."/>
            <person name="Pitluck S."/>
            <person name="Saunders E."/>
            <person name="Brettin T."/>
            <person name="Detter J.C."/>
            <person name="Han C."/>
            <person name="Larimer F."/>
            <person name="Land M."/>
            <person name="Hauser L."/>
            <person name="Kyrpides N."/>
            <person name="Ovchinnikiva G."/>
            <person name="Beliaev A."/>
        </authorList>
    </citation>
    <scope>NUCLEOTIDE SEQUENCE [LARGE SCALE GENOMIC DNA]</scope>
    <source>
        <strain>K</strain>
    </source>
</reference>
<comment type="function">
    <text evidence="1">Cell wall formation. Catalyzes the transfer of a GlcNAc subunit on undecaprenyl-pyrophosphoryl-MurNAc-pentapeptide (lipid intermediate I) to form undecaprenyl-pyrophosphoryl-MurNAc-(pentapeptide)GlcNAc (lipid intermediate II).</text>
</comment>
<comment type="catalytic activity">
    <reaction evidence="1">
        <text>di-trans,octa-cis-undecaprenyl diphospho-N-acetyl-alpha-D-muramoyl-L-alanyl-D-glutamyl-meso-2,6-diaminopimeloyl-D-alanyl-D-alanine + UDP-N-acetyl-alpha-D-glucosamine = di-trans,octa-cis-undecaprenyl diphospho-[N-acetyl-alpha-D-glucosaminyl-(1-&gt;4)]-N-acetyl-alpha-D-muramoyl-L-alanyl-D-glutamyl-meso-2,6-diaminopimeloyl-D-alanyl-D-alanine + UDP + H(+)</text>
        <dbReference type="Rhea" id="RHEA:31227"/>
        <dbReference type="ChEBI" id="CHEBI:15378"/>
        <dbReference type="ChEBI" id="CHEBI:57705"/>
        <dbReference type="ChEBI" id="CHEBI:58223"/>
        <dbReference type="ChEBI" id="CHEBI:61387"/>
        <dbReference type="ChEBI" id="CHEBI:61388"/>
        <dbReference type="EC" id="2.4.1.227"/>
    </reaction>
</comment>
<comment type="pathway">
    <text evidence="1">Cell wall biogenesis; peptidoglycan biosynthesis.</text>
</comment>
<comment type="subcellular location">
    <subcellularLocation>
        <location evidence="1">Cell inner membrane</location>
        <topology evidence="1">Peripheral membrane protein</topology>
        <orientation evidence="1">Cytoplasmic side</orientation>
    </subcellularLocation>
</comment>
<comment type="similarity">
    <text evidence="1">Belongs to the glycosyltransferase 28 family. MurG subfamily.</text>
</comment>
<name>MURG_ANASK</name>
<keyword id="KW-0131">Cell cycle</keyword>
<keyword id="KW-0132">Cell division</keyword>
<keyword id="KW-0997">Cell inner membrane</keyword>
<keyword id="KW-1003">Cell membrane</keyword>
<keyword id="KW-0133">Cell shape</keyword>
<keyword id="KW-0961">Cell wall biogenesis/degradation</keyword>
<keyword id="KW-0328">Glycosyltransferase</keyword>
<keyword id="KW-0472">Membrane</keyword>
<keyword id="KW-0573">Peptidoglycan synthesis</keyword>
<keyword id="KW-0808">Transferase</keyword>
<feature type="chain" id="PRO_1000090404" description="UDP-N-acetylglucosamine--N-acetylmuramyl-(pentapeptide) pyrophosphoryl-undecaprenol N-acetylglucosamine transferase">
    <location>
        <begin position="1"/>
        <end position="383"/>
    </location>
</feature>
<feature type="region of interest" description="Disordered" evidence="2">
    <location>
        <begin position="364"/>
        <end position="383"/>
    </location>
</feature>
<feature type="binding site" evidence="1">
    <location>
        <begin position="10"/>
        <end position="12"/>
    </location>
    <ligand>
        <name>UDP-N-acetyl-alpha-D-glucosamine</name>
        <dbReference type="ChEBI" id="CHEBI:57705"/>
    </ligand>
</feature>
<feature type="binding site" evidence="1">
    <location>
        <position position="124"/>
    </location>
    <ligand>
        <name>UDP-N-acetyl-alpha-D-glucosamine</name>
        <dbReference type="ChEBI" id="CHEBI:57705"/>
    </ligand>
</feature>
<feature type="binding site" evidence="1">
    <location>
        <position position="165"/>
    </location>
    <ligand>
        <name>UDP-N-acetyl-alpha-D-glucosamine</name>
        <dbReference type="ChEBI" id="CHEBI:57705"/>
    </ligand>
</feature>
<feature type="binding site" evidence="1">
    <location>
        <position position="190"/>
    </location>
    <ligand>
        <name>UDP-N-acetyl-alpha-D-glucosamine</name>
        <dbReference type="ChEBI" id="CHEBI:57705"/>
    </ligand>
</feature>
<feature type="binding site" evidence="1">
    <location>
        <position position="245"/>
    </location>
    <ligand>
        <name>UDP-N-acetyl-alpha-D-glucosamine</name>
        <dbReference type="ChEBI" id="CHEBI:57705"/>
    </ligand>
</feature>
<feature type="binding site" evidence="1">
    <location>
        <position position="290"/>
    </location>
    <ligand>
        <name>UDP-N-acetyl-alpha-D-glucosamine</name>
        <dbReference type="ChEBI" id="CHEBI:57705"/>
    </ligand>
</feature>
<protein>
    <recommendedName>
        <fullName evidence="1">UDP-N-acetylglucosamine--N-acetylmuramyl-(pentapeptide) pyrophosphoryl-undecaprenol N-acetylglucosamine transferase</fullName>
        <ecNumber evidence="1">2.4.1.227</ecNumber>
    </recommendedName>
    <alternativeName>
        <fullName evidence="1">Undecaprenyl-PP-MurNAc-pentapeptide-UDPGlcNAc GlcNAc transferase</fullName>
    </alternativeName>
</protein>